<gene>
    <name type="ORF">ORF72</name>
</gene>
<protein>
    <recommendedName>
        <fullName>Uncharacterized protein ORF72</fullName>
    </recommendedName>
</protein>
<reference key="1">
    <citation type="journal article" date="2005" name="J. Bacteriol.">
        <title>Structure and genome organization of AFV2, a novel archaeal lipothrixvirus with unusual terminal and core structures.</title>
        <authorList>
            <person name="Haring M."/>
            <person name="Vestergaard G."/>
            <person name="Brugger K."/>
            <person name="Rachel R."/>
            <person name="Garrett R.A."/>
            <person name="Prangishvili D."/>
        </authorList>
    </citation>
    <scope>NUCLEOTIDE SEQUENCE [GENOMIC DNA]</scope>
</reference>
<organism>
    <name type="scientific">Acidianus filamentous virus 2 (isolate Italy/Pozzuoli)</name>
    <name type="common">AFV-2</name>
    <dbReference type="NCBI Taxonomy" id="654910"/>
    <lineage>
        <taxon>Viruses</taxon>
        <taxon>Adnaviria</taxon>
        <taxon>Zilligvirae</taxon>
        <taxon>Taleaviricota</taxon>
        <taxon>Tokiviricetes</taxon>
        <taxon>Ligamenvirales</taxon>
        <taxon>Lipothrixviridae</taxon>
        <taxon>Deltalipothrixvirus</taxon>
        <taxon>Acidianus filamentous virus 2</taxon>
    </lineage>
</organism>
<keyword id="KW-1185">Reference proteome</keyword>
<proteinExistence type="predicted"/>
<sequence>MIERKYDVDGKEVIVKIEILGAVPPQVVFEIVADKDTLSKYIDGNTLSFAIDIDDIFDAIRETLAPKKVLRD</sequence>
<name>Y072_AFV2P</name>
<dbReference type="EMBL" id="AJ854042">
    <property type="protein sequence ID" value="CAH69403.1"/>
    <property type="molecule type" value="Genomic_DNA"/>
</dbReference>
<dbReference type="RefSeq" id="YP_001496941.1">
    <property type="nucleotide sequence ID" value="NC_009884.1"/>
</dbReference>
<dbReference type="KEGG" id="vg:5656055"/>
<dbReference type="Proteomes" id="UP000006364">
    <property type="component" value="Genome"/>
</dbReference>
<accession>Q573F3</accession>
<feature type="chain" id="PRO_0000384492" description="Uncharacterized protein ORF72">
    <location>
        <begin position="1"/>
        <end position="72"/>
    </location>
</feature>
<organismHost>
    <name type="scientific">Acidianus sp. F28</name>
    <dbReference type="NCBI Taxonomy" id="315458"/>
</organismHost>